<evidence type="ECO:0000255" key="1">
    <source>
        <dbReference type="PROSITE-ProRule" id="PRU00388"/>
    </source>
</evidence>
<evidence type="ECO:0000256" key="2">
    <source>
        <dbReference type="SAM" id="MobiDB-lite"/>
    </source>
</evidence>
<evidence type="ECO:0000269" key="3">
    <source>
    </source>
</evidence>
<evidence type="ECO:0000269" key="4">
    <source>
    </source>
</evidence>
<evidence type="ECO:0000269" key="5">
    <source>
    </source>
</evidence>
<evidence type="ECO:0000269" key="6">
    <source>
    </source>
</evidence>
<evidence type="ECO:0000269" key="7">
    <source>
    </source>
</evidence>
<evidence type="ECO:0000269" key="8">
    <source>
    </source>
</evidence>
<evidence type="ECO:0000269" key="9">
    <source>
    </source>
</evidence>
<evidence type="ECO:0000269" key="10">
    <source>
    </source>
</evidence>
<evidence type="ECO:0000303" key="11">
    <source>
    </source>
</evidence>
<evidence type="ECO:0000303" key="12">
    <source>
    </source>
</evidence>
<evidence type="ECO:0000303" key="13">
    <source ref="7"/>
</evidence>
<evidence type="ECO:0000305" key="14"/>
<evidence type="ECO:0000312" key="15">
    <source>
        <dbReference type="Araport" id="AT2G33770"/>
    </source>
</evidence>
<evidence type="ECO:0000312" key="16">
    <source>
        <dbReference type="EMBL" id="AAC69130.1"/>
    </source>
</evidence>
<sequence>MEMSLTDSDWDSSSDSGSSEHEEVEFSYGGRAQNIFSNLEETIGKIDEFLSFERGFMYGDIVRSATEPSGQSGRVINIDMFVNLESTHGKIMKEVDTKRLQKLRSISLSDYVINGPWVGRVDKIVERVSVTLDDGTNYEVLVDGQDKLVAIPPNLLEDSQYSYYPGQRVQVKLAHAPRSTTWLCGTWRGTQVMGTVCTVEAGLVYVDWVASIVMEGDRNLTAPQALQNPESLTLLPCVSHASWQLGDWCILPGSSHCDIAERQTPNVAAYNLNECHKTFQKGFNRNMQNSGLDELFVITKTKMKVAVMWQDGSCSLGVDSQQLLPVGAVNAHDFWPEQFVVEKETCNSKKWGVVKAVNAKEQTVKVQWTIQVEKEATGCVDEVMEEIVSAYELLEHPDFGFCFSDVVVKLLPEGKFDPNADTIVATEAKHLLTESDYSGAYFLSSIGVVTGFKNGSVKVKWANGSTSKVAPCEIWKMERSEYSNSSTVSSEGSVQDLSQKISQSDEASSNHQETGLVKLYSVGESCNENIPECSSFFLPKAAIGFITNLASSLFGYQGSTSVISSHSRCNDSEDQSDSEVLVQETAESYDNSETNSGEVDMTTTMVNIPIEGKGINKTLDSTLLENSRNQVRFRQFDMVNDCSDHHFLSSDKGLAQSQVTKSWVKKVQQEWSNLEANLPNTIYVRVCEERMDLLRAALVGAPGTPYHDGLFFFDIMLPPQYPHEPPMVHYHSGGMRLNPNLYESGRVCLSLLNTWSGSGTEVWNAGSSSILQLLLSFQALVLNEKPYFNEAGYDKQLGRAEGEKNSVSYNENAFLITCKSMISMLRKPPKHFEMLVKDHFTHRAQHVLAACKAYMEGVPVGSSANLQGNSTTNSTGFKIMLSKLYPKLLEAFSEIGVDCVQEIGPES</sequence>
<proteinExistence type="evidence at protein level"/>
<protein>
    <recommendedName>
        <fullName evidence="11">Probable ubiquitin-conjugating enzyme E2 24</fullName>
        <ecNumber evidence="14">2.3.2.23</ecNumber>
    </recommendedName>
    <alternativeName>
        <fullName evidence="12">AtPHO2</fullName>
    </alternativeName>
    <alternativeName>
        <fullName evidence="11">E2 ubiquitin-conjugating enzyme 24</fullName>
    </alternativeName>
    <alternativeName>
        <fullName evidence="11">Ubiquitin carrier protein 24</fullName>
    </alternativeName>
    <alternativeName>
        <fullName evidence="11">Ubiquitin-protein ligase 24</fullName>
    </alternativeName>
</protein>
<organism>
    <name type="scientific">Arabidopsis thaliana</name>
    <name type="common">Mouse-ear cress</name>
    <dbReference type="NCBI Taxonomy" id="3702"/>
    <lineage>
        <taxon>Eukaryota</taxon>
        <taxon>Viridiplantae</taxon>
        <taxon>Streptophyta</taxon>
        <taxon>Embryophyta</taxon>
        <taxon>Tracheophyta</taxon>
        <taxon>Spermatophyta</taxon>
        <taxon>Magnoliopsida</taxon>
        <taxon>eudicotyledons</taxon>
        <taxon>Gunneridae</taxon>
        <taxon>Pentapetalae</taxon>
        <taxon>rosids</taxon>
        <taxon>malvids</taxon>
        <taxon>Brassicales</taxon>
        <taxon>Brassicaceae</taxon>
        <taxon>Camelineae</taxon>
        <taxon>Arabidopsis</taxon>
    </lineage>
</organism>
<reference key="1">
    <citation type="journal article" date="2005" name="Plant Physiol.">
        <title>Genome analysis and functional characterization of the E2 and RING-type E3 ligase ubiquitination enzymes of Arabidopsis.</title>
        <authorList>
            <person name="Kraft E."/>
            <person name="Stone S.L."/>
            <person name="Ma L."/>
            <person name="Su N."/>
            <person name="Gao Y."/>
            <person name="Lau O.-S."/>
            <person name="Deng X.-W."/>
            <person name="Callis J."/>
        </authorList>
    </citation>
    <scope>NUCLEOTIDE SEQUENCE [MRNA] (ISOFORM 1)</scope>
    <scope>GENE FAMILY</scope>
    <scope>NOMENCLATURE</scope>
</reference>
<reference key="2">
    <citation type="journal article" date="2006" name="Plant Physiol.">
        <title>PHO2, microRNA399, and PHR1 define a phosphate-signaling pathway in plants.</title>
        <authorList>
            <person name="Bari R."/>
            <person name="Datt Pant B."/>
            <person name="Stitt M."/>
            <person name="Scheible W.-R."/>
        </authorList>
    </citation>
    <scope>NUCLEOTIDE SEQUENCE [GENOMIC DNA]</scope>
    <scope>FUNCTION</scope>
    <scope>INDUCTION</scope>
    <scope>DEVELOPMENTAL STAGE</scope>
    <scope>TISSUE SPECIFICITY</scope>
    <scope>REGULATION BY MIR399</scope>
</reference>
<reference key="3">
    <citation type="journal article" date="2006" name="Plant Physiol.">
        <title>pho2, a phosphate overaccumulator, is caused by a nonsense mutation in a microRNA399 target gene.</title>
        <authorList>
            <person name="Aung K."/>
            <person name="Lin S.-I."/>
            <person name="Wu C.-C."/>
            <person name="Huang Y.-T."/>
            <person name="Su C.-L."/>
            <person name="Chiou T.-J."/>
        </authorList>
    </citation>
    <scope>NUCLEOTIDE SEQUENCE [GENOMIC DNA]</scope>
    <scope>DISRUPTION PHENOTYPE</scope>
    <scope>REGULATION BY MIR399</scope>
    <scope>TISSUE SPECIFICITY</scope>
</reference>
<reference key="4">
    <citation type="journal article" date="1999" name="Nature">
        <title>Sequence and analysis of chromosome 2 of the plant Arabidopsis thaliana.</title>
        <authorList>
            <person name="Lin X."/>
            <person name="Kaul S."/>
            <person name="Rounsley S.D."/>
            <person name="Shea T.P."/>
            <person name="Benito M.-I."/>
            <person name="Town C.D."/>
            <person name="Fujii C.Y."/>
            <person name="Mason T.M."/>
            <person name="Bowman C.L."/>
            <person name="Barnstead M.E."/>
            <person name="Feldblyum T.V."/>
            <person name="Buell C.R."/>
            <person name="Ketchum K.A."/>
            <person name="Lee J.J."/>
            <person name="Ronning C.M."/>
            <person name="Koo H.L."/>
            <person name="Moffat K.S."/>
            <person name="Cronin L.A."/>
            <person name="Shen M."/>
            <person name="Pai G."/>
            <person name="Van Aken S."/>
            <person name="Umayam L."/>
            <person name="Tallon L.J."/>
            <person name="Gill J.E."/>
            <person name="Adams M.D."/>
            <person name="Carrera A.J."/>
            <person name="Creasy T.H."/>
            <person name="Goodman H.M."/>
            <person name="Somerville C.R."/>
            <person name="Copenhaver G.P."/>
            <person name="Preuss D."/>
            <person name="Nierman W.C."/>
            <person name="White O."/>
            <person name="Eisen J.A."/>
            <person name="Salzberg S.L."/>
            <person name="Fraser C.M."/>
            <person name="Venter J.C."/>
        </authorList>
    </citation>
    <scope>NUCLEOTIDE SEQUENCE [LARGE SCALE GENOMIC DNA]</scope>
    <source>
        <strain>cv. Columbia</strain>
    </source>
</reference>
<reference key="5">
    <citation type="journal article" date="2017" name="Plant J.">
        <title>Araport11: a complete reannotation of the Arabidopsis thaliana reference genome.</title>
        <authorList>
            <person name="Cheng C.Y."/>
            <person name="Krishnakumar V."/>
            <person name="Chan A.P."/>
            <person name="Thibaud-Nissen F."/>
            <person name="Schobel S."/>
            <person name="Town C.D."/>
        </authorList>
    </citation>
    <scope>GENOME REANNOTATION</scope>
    <source>
        <strain>cv. Columbia</strain>
    </source>
</reference>
<reference key="6">
    <citation type="journal article" date="2003" name="Science">
        <title>Empirical analysis of transcriptional activity in the Arabidopsis genome.</title>
        <authorList>
            <person name="Yamada K."/>
            <person name="Lim J."/>
            <person name="Dale J.M."/>
            <person name="Chen H."/>
            <person name="Shinn P."/>
            <person name="Palm C.J."/>
            <person name="Southwick A.M."/>
            <person name="Wu H.C."/>
            <person name="Kim C.J."/>
            <person name="Nguyen M."/>
            <person name="Pham P.K."/>
            <person name="Cheuk R.F."/>
            <person name="Karlin-Newmann G."/>
            <person name="Liu S.X."/>
            <person name="Lam B."/>
            <person name="Sakano H."/>
            <person name="Wu T."/>
            <person name="Yu G."/>
            <person name="Miranda M."/>
            <person name="Quach H.L."/>
            <person name="Tripp M."/>
            <person name="Chang C.H."/>
            <person name="Lee J.M."/>
            <person name="Toriumi M.J."/>
            <person name="Chan M.M."/>
            <person name="Tang C.C."/>
            <person name="Onodera C.S."/>
            <person name="Deng J.M."/>
            <person name="Akiyama K."/>
            <person name="Ansari Y."/>
            <person name="Arakawa T."/>
            <person name="Banh J."/>
            <person name="Banno F."/>
            <person name="Bowser L."/>
            <person name="Brooks S.Y."/>
            <person name="Carninci P."/>
            <person name="Chao Q."/>
            <person name="Choy N."/>
            <person name="Enju A."/>
            <person name="Goldsmith A.D."/>
            <person name="Gurjal M."/>
            <person name="Hansen N.F."/>
            <person name="Hayashizaki Y."/>
            <person name="Johnson-Hopson C."/>
            <person name="Hsuan V.W."/>
            <person name="Iida K."/>
            <person name="Karnes M."/>
            <person name="Khan S."/>
            <person name="Koesema E."/>
            <person name="Ishida J."/>
            <person name="Jiang P.X."/>
            <person name="Jones T."/>
            <person name="Kawai J."/>
            <person name="Kamiya A."/>
            <person name="Meyers C."/>
            <person name="Nakajima M."/>
            <person name="Narusaka M."/>
            <person name="Seki M."/>
            <person name="Sakurai T."/>
            <person name="Satou M."/>
            <person name="Tamse R."/>
            <person name="Vaysberg M."/>
            <person name="Wallender E.K."/>
            <person name="Wong C."/>
            <person name="Yamamura Y."/>
            <person name="Yuan S."/>
            <person name="Shinozaki K."/>
            <person name="Davis R.W."/>
            <person name="Theologis A."/>
            <person name="Ecker J.R."/>
        </authorList>
    </citation>
    <scope>NUCLEOTIDE SEQUENCE [LARGE SCALE MRNA] (ISOFORM 1)</scope>
    <source>
        <strain>cv. Columbia</strain>
    </source>
</reference>
<reference key="7">
    <citation type="submission" date="2006-07" db="EMBL/GenBank/DDBJ databases">
        <title>Large-scale analysis of RIKEN Arabidopsis full-length (RAFL) cDNAs.</title>
        <authorList>
            <person name="Totoki Y."/>
            <person name="Seki M."/>
            <person name="Ishida J."/>
            <person name="Nakajima M."/>
            <person name="Enju A."/>
            <person name="Kamiya A."/>
            <person name="Narusaka M."/>
            <person name="Shin-i T."/>
            <person name="Nakagawa M."/>
            <person name="Sakamoto N."/>
            <person name="Oishi K."/>
            <person name="Kohara Y."/>
            <person name="Kobayashi M."/>
            <person name="Toyoda A."/>
            <person name="Sakaki Y."/>
            <person name="Sakurai T."/>
            <person name="Iida K."/>
            <person name="Akiyama K."/>
            <person name="Satou M."/>
            <person name="Toyoda T."/>
            <person name="Konagaya A."/>
            <person name="Carninci P."/>
            <person name="Kawai J."/>
            <person name="Hayashizaki Y."/>
            <person name="Shinozaki K."/>
        </authorList>
    </citation>
    <scope>NUCLEOTIDE SEQUENCE [LARGE SCALE MRNA] (ISOFORM 2)</scope>
    <source>
        <strain>cv. Columbia</strain>
    </source>
</reference>
<reference key="8">
    <citation type="journal article" date="2007" name="Nat. Genet.">
        <title>Target mimicry provides a new mechanism for regulation of microRNA activity.</title>
        <authorList>
            <person name="Franco-Zorrilla J.M."/>
            <person name="Valli A."/>
            <person name="Todesco M."/>
            <person name="Mateos I."/>
            <person name="Puga M.I."/>
            <person name="Rubio-Somoza I."/>
            <person name="Leyva A."/>
            <person name="Weigel D."/>
            <person name="Garcia J.A."/>
            <person name="Paz-Ares J."/>
        </authorList>
    </citation>
    <scope>REGULATION BY MIR399</scope>
</reference>
<reference key="9">
    <citation type="journal article" date="2008" name="Plant Physiol.">
        <title>Regulatory network of MicroRNA399 and PHO2 by systemic signaling.</title>
        <authorList>
            <person name="Lin S.-I."/>
            <person name="Chiang S.-F."/>
            <person name="Lin W.-Y."/>
            <person name="Chen J.-W."/>
            <person name="Tseng C.-Y."/>
            <person name="Wu P.-C."/>
            <person name="Chiou T.-J."/>
        </authorList>
    </citation>
    <scope>FUNCTION</scope>
    <scope>INDUCTION</scope>
</reference>
<reference key="10">
    <citation type="journal article" date="2012" name="Plant Cell">
        <title>PHO2-dependent degradation of PHO1 modulates phosphate homeostasis in Arabidopsis.</title>
        <authorList>
            <person name="Liu T.Y."/>
            <person name="Huang T.K."/>
            <person name="Tseng C.Y."/>
            <person name="Lai Y.S."/>
            <person name="Lin S.I."/>
            <person name="Lin W.Y."/>
            <person name="Chen J.W."/>
            <person name="Chiou T.J."/>
        </authorList>
    </citation>
    <scope>FUNCTION</scope>
    <scope>INTERACTION WITH PHO1</scope>
    <scope>MUTAGENESIS OF CYS-748</scope>
    <scope>SUBCELLULAR LOCATION</scope>
</reference>
<reference key="11">
    <citation type="journal article" date="2013" name="Plant Cell">
        <title>Identification of downstream components of ubiquitin-conjugating enzyme PHOSPHATE2 by quantitative membrane proteomics in Arabidopsis roots.</title>
        <authorList>
            <person name="Huang T.K."/>
            <person name="Han C.L."/>
            <person name="Lin S.I."/>
            <person name="Chen Y.J."/>
            <person name="Tsai Y.C."/>
            <person name="Chen Y.R."/>
            <person name="Chen J.W."/>
            <person name="Lin W.Y."/>
            <person name="Chen P.M."/>
            <person name="Liu T.Y."/>
            <person name="Chen Y.S."/>
            <person name="Sun C.M."/>
            <person name="Chiou T.J."/>
        </authorList>
    </citation>
    <scope>FUNCTION</scope>
    <scope>SUBCELLULAR LOCATION</scope>
</reference>
<reference key="12">
    <citation type="journal article" date="2013" name="Plant Cell">
        <title>Nitrogen limitation adaptation, a target of microRNA827, mediates degradation of plasma membrane-localized phosphate transporters to maintain phosphate homeostasis in Arabidopsis.</title>
        <authorList>
            <person name="Lin W.Y."/>
            <person name="Huang T.K."/>
            <person name="Chiou T.J."/>
        </authorList>
    </citation>
    <scope>FUNCTION</scope>
    <scope>SUBCELLULAR LOCATION</scope>
</reference>
<reference key="13">
    <citation type="journal article" date="2014" name="Plant Cell">
        <title>NITROGEN LIMITATION ADAPTATION recruits PHOSPHATE2 to target the phosphate transporter PT2 for degradation during the regulation of Arabidopsis phosphate homeostasis.</title>
        <authorList>
            <person name="Park B.S."/>
            <person name="Seo J.S."/>
            <person name="Chua N.H."/>
        </authorList>
    </citation>
    <scope>FUNCTION</scope>
    <scope>INTERACTION WITH NLA</scope>
</reference>
<dbReference type="EC" id="2.3.2.23" evidence="14"/>
<dbReference type="EMBL" id="DQ027037">
    <property type="protein sequence ID" value="AAY44863.1"/>
    <property type="molecule type" value="mRNA"/>
</dbReference>
<dbReference type="EMBL" id="U78721">
    <property type="protein sequence ID" value="AAC69130.1"/>
    <property type="status" value="ALT_SEQ"/>
    <property type="molecule type" value="Genomic_DNA"/>
</dbReference>
<dbReference type="EMBL" id="CP002685">
    <property type="protein sequence ID" value="AEC08882.1"/>
    <property type="molecule type" value="Genomic_DNA"/>
</dbReference>
<dbReference type="EMBL" id="AY074292">
    <property type="protein sequence ID" value="AAL66989.1"/>
    <property type="molecule type" value="mRNA"/>
</dbReference>
<dbReference type="EMBL" id="AY091326">
    <property type="protein sequence ID" value="AAM14265.1"/>
    <property type="molecule type" value="mRNA"/>
</dbReference>
<dbReference type="EMBL" id="AK229934">
    <property type="protein sequence ID" value="BAF01760.1"/>
    <property type="molecule type" value="mRNA"/>
</dbReference>
<dbReference type="EMBL" id="AK230162">
    <property type="protein sequence ID" value="BAF01971.1"/>
    <property type="molecule type" value="mRNA"/>
</dbReference>
<dbReference type="PIR" id="D84749">
    <property type="entry name" value="D84749"/>
</dbReference>
<dbReference type="RefSeq" id="NP_850218.1">
    <molecule id="Q8VY10-1"/>
    <property type="nucleotide sequence ID" value="NM_179887.3"/>
</dbReference>
<dbReference type="SMR" id="Q8VY10"/>
<dbReference type="BioGRID" id="3290">
    <property type="interactions" value="1"/>
</dbReference>
<dbReference type="FunCoup" id="Q8VY10">
    <property type="interactions" value="2541"/>
</dbReference>
<dbReference type="STRING" id="3702.Q8VY10"/>
<dbReference type="PaxDb" id="3702-AT2G33770.1"/>
<dbReference type="ProteomicsDB" id="228691">
    <molecule id="Q8VY10-1"/>
</dbReference>
<dbReference type="EnsemblPlants" id="AT2G33770.1">
    <molecule id="Q8VY10-1"/>
    <property type="protein sequence ID" value="AT2G33770.1"/>
    <property type="gene ID" value="AT2G33770"/>
</dbReference>
<dbReference type="GeneID" id="817943"/>
<dbReference type="Gramene" id="AT2G33770.1">
    <molecule id="Q8VY10-1"/>
    <property type="protein sequence ID" value="AT2G33770.1"/>
    <property type="gene ID" value="AT2G33770"/>
</dbReference>
<dbReference type="KEGG" id="ath:AT2G33770"/>
<dbReference type="Araport" id="AT2G33770"/>
<dbReference type="TAIR" id="AT2G33770">
    <property type="gene designation" value="PHO2"/>
</dbReference>
<dbReference type="eggNOG" id="KOG0895">
    <property type="taxonomic scope" value="Eukaryota"/>
</dbReference>
<dbReference type="HOGENOM" id="CLU_002088_0_0_1"/>
<dbReference type="InParanoid" id="Q8VY10"/>
<dbReference type="OMA" id="NHEFWPH"/>
<dbReference type="PhylomeDB" id="Q8VY10"/>
<dbReference type="UniPathway" id="UPA00143"/>
<dbReference type="PRO" id="PR:Q8VY10"/>
<dbReference type="Proteomes" id="UP000006548">
    <property type="component" value="Chromosome 2"/>
</dbReference>
<dbReference type="ExpressionAtlas" id="Q8VY10">
    <property type="expression patterns" value="baseline and differential"/>
</dbReference>
<dbReference type="GO" id="GO:0005783">
    <property type="term" value="C:endoplasmic reticulum"/>
    <property type="evidence" value="ECO:0000314"/>
    <property type="project" value="TAIR"/>
</dbReference>
<dbReference type="GO" id="GO:0005789">
    <property type="term" value="C:endoplasmic reticulum membrane"/>
    <property type="evidence" value="ECO:0007669"/>
    <property type="project" value="UniProtKB-SubCell"/>
</dbReference>
<dbReference type="GO" id="GO:0005794">
    <property type="term" value="C:Golgi apparatus"/>
    <property type="evidence" value="ECO:0000314"/>
    <property type="project" value="TAIR"/>
</dbReference>
<dbReference type="GO" id="GO:0000139">
    <property type="term" value="C:Golgi membrane"/>
    <property type="evidence" value="ECO:0007669"/>
    <property type="project" value="UniProtKB-SubCell"/>
</dbReference>
<dbReference type="GO" id="GO:0005524">
    <property type="term" value="F:ATP binding"/>
    <property type="evidence" value="ECO:0007669"/>
    <property type="project" value="UniProtKB-KW"/>
</dbReference>
<dbReference type="GO" id="GO:0016874">
    <property type="term" value="F:ligase activity"/>
    <property type="evidence" value="ECO:0007669"/>
    <property type="project" value="UniProtKB-KW"/>
</dbReference>
<dbReference type="GO" id="GO:0061631">
    <property type="term" value="F:ubiquitin conjugating enzyme activity"/>
    <property type="evidence" value="ECO:0007669"/>
    <property type="project" value="UniProtKB-EC"/>
</dbReference>
<dbReference type="GO" id="GO:0016036">
    <property type="term" value="P:cellular response to phosphate starvation"/>
    <property type="evidence" value="ECO:0000315"/>
    <property type="project" value="TAIR"/>
</dbReference>
<dbReference type="GO" id="GO:0055062">
    <property type="term" value="P:phosphate ion homeostasis"/>
    <property type="evidence" value="ECO:0000315"/>
    <property type="project" value="TAIR"/>
</dbReference>
<dbReference type="GO" id="GO:0006817">
    <property type="term" value="P:phosphate ion transport"/>
    <property type="evidence" value="ECO:0000315"/>
    <property type="project" value="TAIR"/>
</dbReference>
<dbReference type="GO" id="GO:0016567">
    <property type="term" value="P:protein ubiquitination"/>
    <property type="evidence" value="ECO:0007669"/>
    <property type="project" value="UniProtKB-UniPathway"/>
</dbReference>
<dbReference type="GO" id="GO:2000185">
    <property type="term" value="P:regulation of phosphate transmembrane transport"/>
    <property type="evidence" value="ECO:0000316"/>
    <property type="project" value="TAIR"/>
</dbReference>
<dbReference type="CDD" id="cd23837">
    <property type="entry name" value="UBCc_UBE2O"/>
    <property type="match status" value="1"/>
</dbReference>
<dbReference type="FunFam" id="3.10.110.10:FF:000028">
    <property type="entry name" value="Probable ubiquitin-conjugating enzyme E2 23"/>
    <property type="match status" value="1"/>
</dbReference>
<dbReference type="Gene3D" id="3.10.110.10">
    <property type="entry name" value="Ubiquitin Conjugating Enzyme"/>
    <property type="match status" value="1"/>
</dbReference>
<dbReference type="InterPro" id="IPR000608">
    <property type="entry name" value="UBQ-conjugat_E2_core"/>
</dbReference>
<dbReference type="InterPro" id="IPR016135">
    <property type="entry name" value="UBQ-conjugating_enzyme/RWD"/>
</dbReference>
<dbReference type="PANTHER" id="PTHR46116">
    <property type="entry name" value="(E3-INDEPENDENT) E2 UBIQUITIN-CONJUGATING ENZYME"/>
    <property type="match status" value="1"/>
</dbReference>
<dbReference type="PANTHER" id="PTHR46116:SF15">
    <property type="entry name" value="(E3-INDEPENDENT) E2 UBIQUITIN-CONJUGATING ENZYME"/>
    <property type="match status" value="1"/>
</dbReference>
<dbReference type="Pfam" id="PF23043">
    <property type="entry name" value="SH3-B_UBE2O"/>
    <property type="match status" value="1"/>
</dbReference>
<dbReference type="Pfam" id="PF23044">
    <property type="entry name" value="SH3-C_UBE2O"/>
    <property type="match status" value="1"/>
</dbReference>
<dbReference type="Pfam" id="PF23046">
    <property type="entry name" value="tSH3-B_UBE2O"/>
    <property type="match status" value="1"/>
</dbReference>
<dbReference type="Pfam" id="PF00179">
    <property type="entry name" value="UQ_con"/>
    <property type="match status" value="1"/>
</dbReference>
<dbReference type="SMART" id="SM00212">
    <property type="entry name" value="UBCc"/>
    <property type="match status" value="1"/>
</dbReference>
<dbReference type="SUPFAM" id="SSF54495">
    <property type="entry name" value="UBC-like"/>
    <property type="match status" value="1"/>
</dbReference>
<dbReference type="PROSITE" id="PS50127">
    <property type="entry name" value="UBC_2"/>
    <property type="match status" value="1"/>
</dbReference>
<comment type="function">
    <text evidence="7 8 9 10">E2 ubiquitin-protein ligase that mediates E1-dependent protein ubiquitination (PubMed:24474629). Mediates PHO1 degradation through multivesicular body-mediated vacuolar proteolysis in response to inorganic phosphate (Pi) availability (PubMed:22634761). Negatively regulates the protein abundance of PHF1 and PHT1s under Pi-sufficient conditions by facilitating the degradation of PHT1 proteins at the endomembrane (PubMed:22634761, PubMed:24122829). Functions cooperatively with NLA to regulate the abundance of the inorganic phosphate (Pi) transporters PHT1-1, PHT1-2 and PHT1-3 in different subcellular compartments (PubMed:24122828). Regulates Pi homeostasis by mediating, cooperatively with NLA, polyubiquitination of PHT1-4 and its targeting for degradation (PubMed:24474629).</text>
</comment>
<comment type="catalytic activity">
    <reaction evidence="14">
        <text>S-ubiquitinyl-[E1 ubiquitin-activating enzyme]-L-cysteine + [E2 ubiquitin-conjugating enzyme]-L-cysteine = [E1 ubiquitin-activating enzyme]-L-cysteine + S-ubiquitinyl-[E2 ubiquitin-conjugating enzyme]-L-cysteine.</text>
        <dbReference type="EC" id="2.3.2.23"/>
    </reaction>
</comment>
<comment type="pathway">
    <text evidence="1">Protein modification; protein ubiquitination.</text>
</comment>
<comment type="subunit">
    <text evidence="7 10">Interacts with PHO1 (PubMed:22634761). Interacts with NLA (PubMed:24474629).</text>
</comment>
<comment type="subcellular location">
    <subcellularLocation>
        <location evidence="7 9">Golgi apparatus membrane</location>
    </subcellularLocation>
    <subcellularLocation>
        <location evidence="7 9">Endoplasmic reticulum membrane</location>
    </subcellularLocation>
</comment>
<comment type="alternative products">
    <event type="alternative splicing"/>
    <isoform>
        <id>Q8VY10-1</id>
        <name>1</name>
        <sequence type="displayed"/>
    </isoform>
    <isoform>
        <id>Q8VY10-2</id>
        <name>2</name>
        <sequence type="described" ref="VSP_034751"/>
    </isoform>
</comment>
<comment type="tissue specificity">
    <text evidence="3 4">Expressed in the vascular tissues of cotyledons, leaves, roots, sepals, filaments, anthers and junctions between the inflorescence stems and siliques.</text>
</comment>
<comment type="developmental stage">
    <text evidence="4">Up-regulated in senescing leaves and maturating seeds.</text>
</comment>
<comment type="induction">
    <text evidence="4 6">Down-regulated by phosphate deprivation (PubMed:16679424). Systemically regulated by microRNA399 (miR399) (PubMed:16679424, PubMed:18390805).</text>
</comment>
<comment type="disruption phenotype">
    <text evidence="3">Plants are unable to regulate the amount of phosphate accumulated into shoots.</text>
</comment>
<comment type="miscellaneous">
    <text evidence="5">MicroRNA399 (miR399) can be sequestered by IPS1, a non-protein coding RNA containing a motif with sequence complementarity to miR399, but with a mismatched loop at the expected miRNA cleavage site. Thus IPS1 mimics the target of miR399 to block the cleavage of UBC24/PHO2 under Pi-deficient conditions.</text>
</comment>
<comment type="similarity">
    <text evidence="1">Belongs to the ubiquitin-conjugating enzyme family.</text>
</comment>
<comment type="sequence caution" evidence="14">
    <conflict type="erroneous gene model prediction">
        <sequence resource="EMBL-CDS" id="AAC69130"/>
    </conflict>
</comment>
<accession>Q8VY10</accession>
<accession>P93012</accession>
<accession>Q0WLN6</accession>
<accession>Q0WM96</accession>
<name>UBC24_ARATH</name>
<gene>
    <name evidence="11" type="primary">UBC24</name>
    <name evidence="12" type="synonym">PHO2</name>
    <name evidence="15" type="ordered locus">At2g33770</name>
    <name evidence="16" type="ORF">T1B8.8</name>
</gene>
<keyword id="KW-0025">Alternative splicing</keyword>
<keyword id="KW-0067">ATP-binding</keyword>
<keyword id="KW-0256">Endoplasmic reticulum</keyword>
<keyword id="KW-0333">Golgi apparatus</keyword>
<keyword id="KW-0436">Ligase</keyword>
<keyword id="KW-0472">Membrane</keyword>
<keyword id="KW-0547">Nucleotide-binding</keyword>
<keyword id="KW-1185">Reference proteome</keyword>
<keyword id="KW-0808">Transferase</keyword>
<keyword id="KW-0833">Ubl conjugation pathway</keyword>
<feature type="chain" id="PRO_0000344361" description="Probable ubiquitin-conjugating enzyme E2 24">
    <location>
        <begin position="1"/>
        <end position="907"/>
    </location>
</feature>
<feature type="domain" description="UBC core" evidence="1">
    <location>
        <begin position="662"/>
        <end position="822"/>
    </location>
</feature>
<feature type="region of interest" description="Disordered" evidence="2">
    <location>
        <begin position="1"/>
        <end position="23"/>
    </location>
</feature>
<feature type="region of interest" description="Disordered" evidence="2">
    <location>
        <begin position="485"/>
        <end position="509"/>
    </location>
</feature>
<feature type="compositionally biased region" description="Polar residues" evidence="2">
    <location>
        <begin position="495"/>
        <end position="509"/>
    </location>
</feature>
<feature type="active site" description="Glycyl thioester intermediate" evidence="1">
    <location>
        <position position="748"/>
    </location>
</feature>
<feature type="splice variant" id="VSP_034751" description="In isoform 2." evidence="13">
    <location>
        <begin position="1"/>
        <end position="476"/>
    </location>
</feature>
<feature type="mutagenesis site" description="Loss of ubiquitin conjugase activity and loss of down-regulation of PHO1." evidence="7">
    <original>C</original>
    <variation>A</variation>
    <location>
        <position position="748"/>
    </location>
</feature>